<name>BLR38_BRELC</name>
<comment type="function">
    <text evidence="2">Secreted effector that triggers a robust hypersensitive response (HR) in Lactuca serriola LS102. The response to BLN06 was visible as strong necrosis (PubMed:30251420). Although effector recognition is frequently associated with single dominant R gene loci, the recognition of BLR38 requires 2 unlinked loci that display incomplete dominance (PubMed:30251420).</text>
</comment>
<comment type="subcellular location">
    <subcellularLocation>
        <location evidence="5">Secreted</location>
    </subcellularLocation>
    <subcellularLocation>
        <location evidence="5">Host nucleus</location>
    </subcellularLocation>
</comment>
<comment type="domain">
    <text evidence="5">Has the canonical translocation motif RxLR, but lacks the canonical EER motif, which characterizes most oomycete effectors identified so far.</text>
</comment>
<comment type="similarity">
    <text evidence="4">Belongs to the RxLR effector family.</text>
</comment>
<accession>A0A3B7TNM4</accession>
<proteinExistence type="evidence at transcript level"/>
<reference key="1">
    <citation type="journal article" date="2019" name="Mol. Plant Pathol.">
        <title>Recognition of lettuce downy mildew effector BLR38 in Lactuca serriola LS102 requires two unlinked loci.</title>
        <authorList>
            <person name="Pelgrom A.J.E."/>
            <person name="Eikelhof J."/>
            <person name="Elberse J."/>
            <person name="Meisrimler C.N."/>
            <person name="Raedts R."/>
            <person name="Klein J."/>
            <person name="Van den Ackerveken G."/>
        </authorList>
    </citation>
    <scope>NUCLEOTIDE SEQUENCE [MRNA]</scope>
    <scope>DOMAIN</scope>
    <scope>FUNCTION</scope>
    <scope>SUBCELLULAR LOCATION</scope>
    <source>
        <strain>Race Bl:24</strain>
    </source>
</reference>
<sequence>MHCTVFFLLIACAKSSYGQTRSVSTAKSESKSDEYSYNSDAIDQSRLLRGAVNPVSENMALRKFIFDMPEMLRPEHFEPIFINPAAVKEVIKDYLAYGEALCGSGYDPRLLALFGVRPTVLKQELMKAKGVTLSVMPSSRKRPRALDEVESEVENFRNVLKDFFIPPTTTNPSKLIPDDIETLVPEHVSAHFNSLVYLMYFAVLHFDSQELATMSSSVLLKYALQKNLLLREKIESGTLGEWERDFRLMRVLNVYKSEQT</sequence>
<feature type="signal peptide" evidence="1">
    <location>
        <begin position="1"/>
        <end position="18"/>
    </location>
</feature>
<feature type="chain" id="PRO_5017735352" description="RxLR effector protein BLR38" evidence="1">
    <location>
        <begin position="19"/>
        <end position="260"/>
    </location>
</feature>
<feature type="short sequence motif" description="RxLR" evidence="5">
    <location>
        <begin position="46"/>
        <end position="49"/>
    </location>
</feature>
<feature type="short sequence motif" description="Nuclear localuization signal (NLS)" evidence="5">
    <location>
        <begin position="136"/>
        <end position="148"/>
    </location>
</feature>
<evidence type="ECO:0000255" key="1"/>
<evidence type="ECO:0000269" key="2">
    <source>
    </source>
</evidence>
<evidence type="ECO:0000303" key="3">
    <source>
    </source>
</evidence>
<evidence type="ECO:0000305" key="4"/>
<evidence type="ECO:0000305" key="5">
    <source>
    </source>
</evidence>
<keyword id="KW-1048">Host nucleus</keyword>
<keyword id="KW-0964">Secreted</keyword>
<keyword id="KW-0732">Signal</keyword>
<dbReference type="EMBL" id="MG686571">
    <property type="protein sequence ID" value="AYE92115.1"/>
    <property type="molecule type" value="mRNA"/>
</dbReference>
<dbReference type="VEuPathDB" id="FungiDB:CCR75_005744"/>
<dbReference type="GO" id="GO:0005576">
    <property type="term" value="C:extracellular region"/>
    <property type="evidence" value="ECO:0007669"/>
    <property type="project" value="UniProtKB-SubCell"/>
</dbReference>
<dbReference type="GO" id="GO:0042025">
    <property type="term" value="C:host cell nucleus"/>
    <property type="evidence" value="ECO:0007669"/>
    <property type="project" value="UniProtKB-SubCell"/>
</dbReference>
<protein>
    <recommendedName>
        <fullName evidence="3">RxLR effector protein BLR38</fullName>
    </recommendedName>
</protein>
<gene>
    <name evidence="3" type="primary">BLR38</name>
</gene>
<organism>
    <name type="scientific">Bremia lactucae</name>
    <name type="common">Lettuce downy mildew</name>
    <dbReference type="NCBI Taxonomy" id="4779"/>
    <lineage>
        <taxon>Eukaryota</taxon>
        <taxon>Sar</taxon>
        <taxon>Stramenopiles</taxon>
        <taxon>Oomycota</taxon>
        <taxon>Peronosporales</taxon>
        <taxon>Peronosporaceae</taxon>
        <taxon>Bremia</taxon>
    </lineage>
</organism>